<organism>
    <name type="scientific">Bacillus cereus (strain Q1)</name>
    <dbReference type="NCBI Taxonomy" id="361100"/>
    <lineage>
        <taxon>Bacteria</taxon>
        <taxon>Bacillati</taxon>
        <taxon>Bacillota</taxon>
        <taxon>Bacilli</taxon>
        <taxon>Bacillales</taxon>
        <taxon>Bacillaceae</taxon>
        <taxon>Bacillus</taxon>
        <taxon>Bacillus cereus group</taxon>
    </lineage>
</organism>
<comment type="similarity">
    <text evidence="1">Belongs to the UPF0637 family.</text>
</comment>
<name>Y3749_BACCQ</name>
<reference key="1">
    <citation type="journal article" date="2009" name="J. Bacteriol.">
        <title>Complete genome sequence of the extremophilic Bacillus cereus strain Q1 with industrial applications.</title>
        <authorList>
            <person name="Xiong Z."/>
            <person name="Jiang Y."/>
            <person name="Qi D."/>
            <person name="Lu H."/>
            <person name="Yang F."/>
            <person name="Yang J."/>
            <person name="Chen L."/>
            <person name="Sun L."/>
            <person name="Xu X."/>
            <person name="Xue Y."/>
            <person name="Zhu Y."/>
            <person name="Jin Q."/>
        </authorList>
    </citation>
    <scope>NUCLEOTIDE SEQUENCE [LARGE SCALE GENOMIC DNA]</scope>
    <source>
        <strain>Q1</strain>
    </source>
</reference>
<feature type="chain" id="PRO_1000188672" description="UPF0637 protein BCQ_3749">
    <location>
        <begin position="1"/>
        <end position="208"/>
    </location>
</feature>
<evidence type="ECO:0000255" key="1">
    <source>
        <dbReference type="HAMAP-Rule" id="MF_01851"/>
    </source>
</evidence>
<protein>
    <recommendedName>
        <fullName evidence="1">UPF0637 protein BCQ_3749</fullName>
    </recommendedName>
</protein>
<proteinExistence type="inferred from homology"/>
<accession>B9IW40</accession>
<dbReference type="EMBL" id="CP000227">
    <property type="protein sequence ID" value="ACM14177.1"/>
    <property type="molecule type" value="Genomic_DNA"/>
</dbReference>
<dbReference type="SMR" id="B9IW40"/>
<dbReference type="KEGG" id="bcq:BCQ_3749"/>
<dbReference type="HOGENOM" id="CLU_096059_0_0_9"/>
<dbReference type="Proteomes" id="UP000000441">
    <property type="component" value="Chromosome"/>
</dbReference>
<dbReference type="Gene3D" id="3.30.930.20">
    <property type="entry name" value="Protein of unknown function DUF1054"/>
    <property type="match status" value="1"/>
</dbReference>
<dbReference type="HAMAP" id="MF_01851">
    <property type="entry name" value="UPF0637"/>
    <property type="match status" value="1"/>
</dbReference>
<dbReference type="InterPro" id="IPR009403">
    <property type="entry name" value="UPF0637"/>
</dbReference>
<dbReference type="InterPro" id="IPR053707">
    <property type="entry name" value="UPF0637_domain_sf"/>
</dbReference>
<dbReference type="Pfam" id="PF06335">
    <property type="entry name" value="DUF1054"/>
    <property type="match status" value="1"/>
</dbReference>
<dbReference type="PIRSF" id="PIRSF021332">
    <property type="entry name" value="DUF1054"/>
    <property type="match status" value="1"/>
</dbReference>
<dbReference type="SUPFAM" id="SSF142913">
    <property type="entry name" value="YktB/PF0168-like"/>
    <property type="match status" value="1"/>
</dbReference>
<sequence>MTLQTFKSTDFEVFTVDGLEERMSAIKTNIHPKLEALGEQFAAYLSKQTDENFFYHVAKHARRKVNPPNDTWVAFSTNKRGYKMLPHFQIGLWGTHAFIYFGLIYECPQKVETAHAFLEHINDLKTNIPNDFVWSIDHTKPSVKLHKTLETNDLQKMIERLATVKKAELLVGIHISPEEFSAMTNEQFLAKIESTMQSLLPLYALCNR</sequence>
<gene>
    <name type="ordered locus">BCQ_3749</name>
</gene>